<feature type="chain" id="PRO_0000363295" description="Probable protein phosphatase 2C 48">
    <location>
        <begin position="1"/>
        <end position="353"/>
    </location>
</feature>
<feature type="domain" description="PPM-type phosphatase" evidence="2">
    <location>
        <begin position="54"/>
        <end position="348"/>
    </location>
</feature>
<feature type="binding site" evidence="1">
    <location>
        <position position="90"/>
    </location>
    <ligand>
        <name>Mn(2+)</name>
        <dbReference type="ChEBI" id="CHEBI:29035"/>
        <label>1</label>
    </ligand>
</feature>
<feature type="binding site" evidence="1">
    <location>
        <position position="90"/>
    </location>
    <ligand>
        <name>Mn(2+)</name>
        <dbReference type="ChEBI" id="CHEBI:29035"/>
        <label>2</label>
    </ligand>
</feature>
<feature type="binding site" evidence="1">
    <location>
        <position position="91"/>
    </location>
    <ligand>
        <name>Mn(2+)</name>
        <dbReference type="ChEBI" id="CHEBI:29035"/>
        <label>1</label>
    </ligand>
</feature>
<feature type="binding site" evidence="1">
    <location>
        <position position="293"/>
    </location>
    <ligand>
        <name>Mn(2+)</name>
        <dbReference type="ChEBI" id="CHEBI:29035"/>
        <label>2</label>
    </ligand>
</feature>
<feature type="binding site" evidence="1">
    <location>
        <position position="339"/>
    </location>
    <ligand>
        <name>Mn(2+)</name>
        <dbReference type="ChEBI" id="CHEBI:29035"/>
        <label>2</label>
    </ligand>
</feature>
<feature type="splice variant" id="VSP_036270" description="In isoform 2." evidence="3">
    <original>VWDVVSNEEAVQIVASAPEREKAAKRLVEFAVRAWRRKRRGIAVDDCSAICLFFHSPPS</original>
    <variation>DKHLNLFVFVCAAGVGRGVERGGGADRGVGAGEGEGGEAARRVRRPGMEAQAPGHRRRRLLGDLPLLPLAAVLNNTHADTHAANKNRTRRRQCRRRR</variation>
    <location>
        <begin position="295"/>
        <end position="353"/>
    </location>
</feature>
<accession>Q6L482</accession>
<accession>A0A0N7KKM0</accession>
<evidence type="ECO:0000250" key="1"/>
<evidence type="ECO:0000255" key="2">
    <source>
        <dbReference type="PROSITE-ProRule" id="PRU01082"/>
    </source>
</evidence>
<evidence type="ECO:0000305" key="3"/>
<dbReference type="EC" id="3.1.3.16"/>
<dbReference type="EMBL" id="AC104272">
    <property type="protein sequence ID" value="AAV43855.1"/>
    <property type="molecule type" value="Genomic_DNA"/>
</dbReference>
<dbReference type="EMBL" id="AC136999">
    <property type="protein sequence ID" value="AAT38039.1"/>
    <property type="molecule type" value="Genomic_DNA"/>
</dbReference>
<dbReference type="EMBL" id="AP008211">
    <property type="protein sequence ID" value="BAF17217.1"/>
    <property type="molecule type" value="Genomic_DNA"/>
</dbReference>
<dbReference type="EMBL" id="AP014961">
    <property type="protein sequence ID" value="BAS93593.1"/>
    <property type="molecule type" value="Genomic_DNA"/>
</dbReference>
<dbReference type="EMBL" id="AK100777">
    <property type="status" value="NOT_ANNOTATED_CDS"/>
    <property type="molecule type" value="mRNA"/>
</dbReference>
<dbReference type="RefSeq" id="XP_015639910.1">
    <property type="nucleotide sequence ID" value="XM_015784424.1"/>
</dbReference>
<dbReference type="RefSeq" id="XP_015639911.1">
    <property type="nucleotide sequence ID" value="XM_015784425.1"/>
</dbReference>
<dbReference type="SMR" id="Q6L482"/>
<dbReference type="FunCoup" id="Q6L482">
    <property type="interactions" value="7"/>
</dbReference>
<dbReference type="STRING" id="39947.Q6L482"/>
<dbReference type="PaxDb" id="39947-Q6L482"/>
<dbReference type="EnsemblPlants" id="Os05t0358500-01">
    <molecule id="Q6L482-1"/>
    <property type="protein sequence ID" value="Os05t0358500-01"/>
    <property type="gene ID" value="Os05g0358500"/>
</dbReference>
<dbReference type="EnsemblPlants" id="Os05t0358500-02">
    <molecule id="Q6L482-1"/>
    <property type="protein sequence ID" value="Os05t0358500-02"/>
    <property type="gene ID" value="Os05g0358500"/>
</dbReference>
<dbReference type="Gramene" id="Os05t0358500-01">
    <molecule id="Q6L482-1"/>
    <property type="protein sequence ID" value="Os05t0358500-01"/>
    <property type="gene ID" value="Os05g0358500"/>
</dbReference>
<dbReference type="Gramene" id="Os05t0358500-02">
    <molecule id="Q6L482-1"/>
    <property type="protein sequence ID" value="Os05t0358500-02"/>
    <property type="gene ID" value="Os05g0358500"/>
</dbReference>
<dbReference type="KEGG" id="dosa:Os05g0358500"/>
<dbReference type="eggNOG" id="KOG0698">
    <property type="taxonomic scope" value="Eukaryota"/>
</dbReference>
<dbReference type="HOGENOM" id="CLU_013173_6_0_1"/>
<dbReference type="InParanoid" id="Q6L482"/>
<dbReference type="OMA" id="HSYIKTC"/>
<dbReference type="OrthoDB" id="10264738at2759"/>
<dbReference type="Proteomes" id="UP000000763">
    <property type="component" value="Chromosome 5"/>
</dbReference>
<dbReference type="Proteomes" id="UP000059680">
    <property type="component" value="Chromosome 5"/>
</dbReference>
<dbReference type="GO" id="GO:0046872">
    <property type="term" value="F:metal ion binding"/>
    <property type="evidence" value="ECO:0007669"/>
    <property type="project" value="UniProtKB-KW"/>
</dbReference>
<dbReference type="GO" id="GO:0004722">
    <property type="term" value="F:protein serine/threonine phosphatase activity"/>
    <property type="evidence" value="ECO:0000318"/>
    <property type="project" value="GO_Central"/>
</dbReference>
<dbReference type="GO" id="GO:1902531">
    <property type="term" value="P:regulation of intracellular signal transduction"/>
    <property type="evidence" value="ECO:0000318"/>
    <property type="project" value="GO_Central"/>
</dbReference>
<dbReference type="GO" id="GO:0009414">
    <property type="term" value="P:response to water deprivation"/>
    <property type="evidence" value="ECO:0000318"/>
    <property type="project" value="GO_Central"/>
</dbReference>
<dbReference type="CDD" id="cd00143">
    <property type="entry name" value="PP2Cc"/>
    <property type="match status" value="1"/>
</dbReference>
<dbReference type="FunFam" id="3.60.40.10:FF:000038">
    <property type="entry name" value="Probable protein phosphatase 2C 34"/>
    <property type="match status" value="1"/>
</dbReference>
<dbReference type="Gene3D" id="3.60.40.10">
    <property type="entry name" value="PPM-type phosphatase domain"/>
    <property type="match status" value="1"/>
</dbReference>
<dbReference type="InterPro" id="IPR015655">
    <property type="entry name" value="PP2C"/>
</dbReference>
<dbReference type="InterPro" id="IPR036457">
    <property type="entry name" value="PPM-type-like_dom_sf"/>
</dbReference>
<dbReference type="InterPro" id="IPR001932">
    <property type="entry name" value="PPM-type_phosphatase-like_dom"/>
</dbReference>
<dbReference type="PANTHER" id="PTHR47992">
    <property type="entry name" value="PROTEIN PHOSPHATASE"/>
    <property type="match status" value="1"/>
</dbReference>
<dbReference type="Pfam" id="PF00481">
    <property type="entry name" value="PP2C"/>
    <property type="match status" value="1"/>
</dbReference>
<dbReference type="SMART" id="SM00332">
    <property type="entry name" value="PP2Cc"/>
    <property type="match status" value="1"/>
</dbReference>
<dbReference type="SUPFAM" id="SSF81606">
    <property type="entry name" value="PP2C-like"/>
    <property type="match status" value="1"/>
</dbReference>
<dbReference type="PROSITE" id="PS51746">
    <property type="entry name" value="PPM_2"/>
    <property type="match status" value="1"/>
</dbReference>
<sequence length="353" mass="38101">MRHISSLLQGLARSLSVGKERKGGDGDDGKAAAATATAVLRTSGTLWGEGSETFAAVCSRRGEKGINQDCSIVCEGFGCEEGSVLCGIFDGHGQWGHYVAKAVRESLPPALLRRWREAVTLAALIDGGEKRLCECRPDLWRQSYLAACAAVDAELRASRRLDAVHSGCTALSLVKHGDLLVVANVGDSRAVLATASPDDGGGARLAAVQLTVDFKPNLPQERERIMECNGRVQCLADEPGVHRVWRPDREGPGLAMSRAFGDYCVKDYGVISAPEVTHRRITAQDHFVILATDGVWDVVSNEEAVQIVASAPEREKAAKRLVEFAVRAWRRKRRGIAVDDCSAICLFFHSPPS</sequence>
<comment type="catalytic activity">
    <reaction>
        <text>O-phospho-L-seryl-[protein] + H2O = L-seryl-[protein] + phosphate</text>
        <dbReference type="Rhea" id="RHEA:20629"/>
        <dbReference type="Rhea" id="RHEA-COMP:9863"/>
        <dbReference type="Rhea" id="RHEA-COMP:11604"/>
        <dbReference type="ChEBI" id="CHEBI:15377"/>
        <dbReference type="ChEBI" id="CHEBI:29999"/>
        <dbReference type="ChEBI" id="CHEBI:43474"/>
        <dbReference type="ChEBI" id="CHEBI:83421"/>
        <dbReference type="EC" id="3.1.3.16"/>
    </reaction>
</comment>
<comment type="catalytic activity">
    <reaction>
        <text>O-phospho-L-threonyl-[protein] + H2O = L-threonyl-[protein] + phosphate</text>
        <dbReference type="Rhea" id="RHEA:47004"/>
        <dbReference type="Rhea" id="RHEA-COMP:11060"/>
        <dbReference type="Rhea" id="RHEA-COMP:11605"/>
        <dbReference type="ChEBI" id="CHEBI:15377"/>
        <dbReference type="ChEBI" id="CHEBI:30013"/>
        <dbReference type="ChEBI" id="CHEBI:43474"/>
        <dbReference type="ChEBI" id="CHEBI:61977"/>
        <dbReference type="EC" id="3.1.3.16"/>
    </reaction>
</comment>
<comment type="cofactor">
    <cofactor evidence="1">
        <name>Mg(2+)</name>
        <dbReference type="ChEBI" id="CHEBI:18420"/>
    </cofactor>
    <cofactor evidence="1">
        <name>Mn(2+)</name>
        <dbReference type="ChEBI" id="CHEBI:29035"/>
    </cofactor>
    <text evidence="1">Binds 2 magnesium or manganese ions per subunit.</text>
</comment>
<comment type="alternative products">
    <event type="alternative splicing"/>
    <isoform>
        <id>Q6L482-1</id>
        <name>1</name>
        <sequence type="displayed"/>
    </isoform>
    <isoform>
        <id>Q6L482-2</id>
        <name>2</name>
        <sequence type="described" ref="VSP_036270"/>
    </isoform>
</comment>
<comment type="similarity">
    <text evidence="3">Belongs to the PP2C family.</text>
</comment>
<comment type="sequence caution" evidence="3">
    <conflict type="frameshift">
        <sequence resource="EMBL" id="AK100777"/>
    </conflict>
</comment>
<reference key="1">
    <citation type="journal article" date="2005" name="Mol. Genet. Genomics">
        <title>A fine physical map of the rice chromosome 5.</title>
        <authorList>
            <person name="Cheng C.-H."/>
            <person name="Chung M.C."/>
            <person name="Liu S.-M."/>
            <person name="Chen S.-K."/>
            <person name="Kao F.Y."/>
            <person name="Lin S.-J."/>
            <person name="Hsiao S.-H."/>
            <person name="Tseng I.C."/>
            <person name="Hsing Y.-I.C."/>
            <person name="Wu H.-P."/>
            <person name="Chen C.-S."/>
            <person name="Shaw J.-F."/>
            <person name="Wu J."/>
            <person name="Matsumoto T."/>
            <person name="Sasaki T."/>
            <person name="Chen H.-C."/>
            <person name="Chow T.-Y."/>
        </authorList>
    </citation>
    <scope>NUCLEOTIDE SEQUENCE [LARGE SCALE GENOMIC DNA]</scope>
    <source>
        <strain>cv. Nipponbare</strain>
    </source>
</reference>
<reference key="2">
    <citation type="journal article" date="2005" name="Nature">
        <title>The map-based sequence of the rice genome.</title>
        <authorList>
            <consortium name="International rice genome sequencing project (IRGSP)"/>
        </authorList>
    </citation>
    <scope>NUCLEOTIDE SEQUENCE [LARGE SCALE GENOMIC DNA]</scope>
    <source>
        <strain>cv. Nipponbare</strain>
    </source>
</reference>
<reference key="3">
    <citation type="journal article" date="2008" name="Nucleic Acids Res.">
        <title>The rice annotation project database (RAP-DB): 2008 update.</title>
        <authorList>
            <consortium name="The rice annotation project (RAP)"/>
        </authorList>
    </citation>
    <scope>GENOME REANNOTATION</scope>
    <source>
        <strain>cv. Nipponbare</strain>
    </source>
</reference>
<reference key="4">
    <citation type="journal article" date="2013" name="Rice">
        <title>Improvement of the Oryza sativa Nipponbare reference genome using next generation sequence and optical map data.</title>
        <authorList>
            <person name="Kawahara Y."/>
            <person name="de la Bastide M."/>
            <person name="Hamilton J.P."/>
            <person name="Kanamori H."/>
            <person name="McCombie W.R."/>
            <person name="Ouyang S."/>
            <person name="Schwartz D.C."/>
            <person name="Tanaka T."/>
            <person name="Wu J."/>
            <person name="Zhou S."/>
            <person name="Childs K.L."/>
            <person name="Davidson R.M."/>
            <person name="Lin H."/>
            <person name="Quesada-Ocampo L."/>
            <person name="Vaillancourt B."/>
            <person name="Sakai H."/>
            <person name="Lee S.S."/>
            <person name="Kim J."/>
            <person name="Numa H."/>
            <person name="Itoh T."/>
            <person name="Buell C.R."/>
            <person name="Matsumoto T."/>
        </authorList>
    </citation>
    <scope>GENOME REANNOTATION</scope>
    <source>
        <strain>cv. Nipponbare</strain>
    </source>
</reference>
<reference key="5">
    <citation type="journal article" date="2003" name="Science">
        <title>Collection, mapping, and annotation of over 28,000 cDNA clones from japonica rice.</title>
        <authorList>
            <consortium name="The rice full-length cDNA consortium"/>
        </authorList>
    </citation>
    <scope>NUCLEOTIDE SEQUENCE [LARGE SCALE MRNA] (ISOFORM 1)</scope>
    <source>
        <strain>cv. Nipponbare</strain>
    </source>
</reference>
<reference key="6">
    <citation type="journal article" date="2008" name="BMC Genomics">
        <title>Genome-wide and expression analysis of protein phosphatase 2C in rice and Arabidopsis.</title>
        <authorList>
            <person name="Xue T."/>
            <person name="Wang D."/>
            <person name="Zhang S."/>
            <person name="Ehlting J."/>
            <person name="Ni F."/>
            <person name="Jacab S."/>
            <person name="Zheng C."/>
            <person name="Zhong Y."/>
        </authorList>
    </citation>
    <scope>GENE FAMILY</scope>
    <scope>NOMENCLATURE</scope>
</reference>
<gene>
    <name type="ordered locus">Os05g0358500</name>
    <name type="ordered locus">LOC_Os05g29030</name>
    <name type="ORF">OJ1045_C06.13</name>
    <name type="ORF">OSJNBa0009L15.3</name>
</gene>
<organism>
    <name type="scientific">Oryza sativa subsp. japonica</name>
    <name type="common">Rice</name>
    <dbReference type="NCBI Taxonomy" id="39947"/>
    <lineage>
        <taxon>Eukaryota</taxon>
        <taxon>Viridiplantae</taxon>
        <taxon>Streptophyta</taxon>
        <taxon>Embryophyta</taxon>
        <taxon>Tracheophyta</taxon>
        <taxon>Spermatophyta</taxon>
        <taxon>Magnoliopsida</taxon>
        <taxon>Liliopsida</taxon>
        <taxon>Poales</taxon>
        <taxon>Poaceae</taxon>
        <taxon>BOP clade</taxon>
        <taxon>Oryzoideae</taxon>
        <taxon>Oryzeae</taxon>
        <taxon>Oryzinae</taxon>
        <taxon>Oryza</taxon>
        <taxon>Oryza sativa</taxon>
    </lineage>
</organism>
<keyword id="KW-0025">Alternative splicing</keyword>
<keyword id="KW-0378">Hydrolase</keyword>
<keyword id="KW-0460">Magnesium</keyword>
<keyword id="KW-0464">Manganese</keyword>
<keyword id="KW-0479">Metal-binding</keyword>
<keyword id="KW-0904">Protein phosphatase</keyword>
<keyword id="KW-1185">Reference proteome</keyword>
<protein>
    <recommendedName>
        <fullName>Probable protein phosphatase 2C 48</fullName>
        <shortName>OsPP2C48</shortName>
        <ecNumber>3.1.3.16</ecNumber>
    </recommendedName>
</protein>
<name>P2C48_ORYSJ</name>
<proteinExistence type="evidence at transcript level"/>